<feature type="peptide" id="PRO_0000438958" description="[Thr6]-bradykinin" evidence="2">
    <location>
        <begin position="1"/>
        <end position="9"/>
    </location>
</feature>
<feature type="peptide" id="PRO_0000438959" description="Des-Arg9-[Thr6]-bradykinin" evidence="2">
    <location>
        <begin position="1"/>
        <end position="8"/>
    </location>
</feature>
<feature type="modified residue" description="4-hydroxyproline; partial; in form [Thr6]-bradykinin" evidence="2">
    <location>
        <position position="3"/>
    </location>
</feature>
<organism evidence="3">
    <name type="scientific">Physalaemus nattereri</name>
    <name type="common">Cuyaba dwarf frog</name>
    <name type="synonym">Eupemphix nattereri</name>
    <dbReference type="NCBI Taxonomy" id="248869"/>
    <lineage>
        <taxon>Eukaryota</taxon>
        <taxon>Metazoa</taxon>
        <taxon>Chordata</taxon>
        <taxon>Craniata</taxon>
        <taxon>Vertebrata</taxon>
        <taxon>Euteleostomi</taxon>
        <taxon>Amphibia</taxon>
        <taxon>Batrachia</taxon>
        <taxon>Anura</taxon>
        <taxon>Neobatrachia</taxon>
        <taxon>Hyloidea</taxon>
        <taxon>Leptodactylidae</taxon>
        <taxon>Leiuperinae</taxon>
        <taxon>Physalaemus</taxon>
    </lineage>
</organism>
<sequence>RPPGFTPFR</sequence>
<keyword id="KW-0878">Amphibian defense peptide</keyword>
<keyword id="KW-1222">Bradykinin receptor impairing toxin</keyword>
<keyword id="KW-0903">Direct protein sequencing</keyword>
<keyword id="KW-1213">G-protein coupled receptor impairing toxin</keyword>
<keyword id="KW-0379">Hydroxylation</keyword>
<keyword id="KW-0964">Secreted</keyword>
<keyword id="KW-0800">Toxin</keyword>
<reference evidence="4" key="1">
    <citation type="journal article" date="2015" name="Rapid Commun. Mass Spectrom.">
        <title>Skin secretion peptides: the molecular facet of the deimatic behavior of the four-eyed frog, Physalaemus nattereri (Anura, Leptodactylidae).</title>
        <authorList>
            <person name="Barbosa E.A."/>
            <person name="Iembo T."/>
            <person name="Martins G.R."/>
            <person name="Silva L.P."/>
            <person name="Prates M.V."/>
            <person name="Andrade A.C."/>
            <person name="Bloch C. Jr."/>
        </authorList>
    </citation>
    <scope>PROTEIN SEQUENCE</scope>
    <scope>SUBCELLULAR LOCATION</scope>
    <scope>MASS SPECTROMETRY</scope>
    <scope>HYDROXYLATION AT PRO-3</scope>
    <scope>IDENTIFICATION BY MASS SPECTROMETRY</scope>
    <source>
        <tissue evidence="3">Skin secretion</tissue>
    </source>
</reference>
<dbReference type="GO" id="GO:0005576">
    <property type="term" value="C:extracellular region"/>
    <property type="evidence" value="ECO:0000314"/>
    <property type="project" value="UniProtKB"/>
</dbReference>
<dbReference type="GO" id="GO:0090729">
    <property type="term" value="F:toxin activity"/>
    <property type="evidence" value="ECO:0007669"/>
    <property type="project" value="UniProtKB-KW"/>
</dbReference>
<dbReference type="GO" id="GO:0006952">
    <property type="term" value="P:defense response"/>
    <property type="evidence" value="ECO:0007669"/>
    <property type="project" value="UniProtKB-KW"/>
</dbReference>
<name>BRKP4_PHYNA</name>
<accession>C0HKA8</accession>
<comment type="function">
    <text evidence="1">Thr6-bradykinin: Induces relaxation of rat smooth muscle from tail artery and contraction of that from ileum, urinary bladder and uterus. Binds to both bradykinin receptor B1 (BDKRB1) and B2 (BDKRB2).</text>
</comment>
<comment type="function">
    <text evidence="1">[Hyp3,Thr6]-bradykinin: May produce in vitro relaxation of rat arterial smooth muscle and constriction of intestinal smooth muscle. May target bradykinin receptors (BDKRB).</text>
</comment>
<comment type="function">
    <molecule>Des-Arg9-[Thr6]-bradykinin</molecule>
    <text evidence="1">May produce in vitro relaxation of rat arterial smooth muscle and constriction of intestinal smooth muscle. May target bradykinin receptors (BDKRB).</text>
</comment>
<comment type="subcellular location">
    <subcellularLocation>
        <location evidence="2">Secreted</location>
    </subcellularLocation>
</comment>
<comment type="tissue specificity">
    <text evidence="5">Expressed by the skin glands.</text>
</comment>
<comment type="mass spectrometry">
    <molecule>[Thr6]-bradykinin</molecule>
    <text>[Thr6]-bradykinin.</text>
</comment>
<comment type="mass spectrometry">
    <molecule>[Thr6]-bradykinin</molecule>
    <text>[Hyp3,Thr6]-bradykinin.</text>
</comment>
<comment type="mass spectrometry">
    <molecule>Des-Arg9-[Thr6]-bradykinin</molecule>
    <text>[Thr6,des-Arg9]-bradykinin.</text>
</comment>
<comment type="similarity">
    <text evidence="4">Belongs to the bradykinin-related peptide family.</text>
</comment>
<evidence type="ECO:0000250" key="1">
    <source>
        <dbReference type="UniProtKB" id="L0PIN3"/>
    </source>
</evidence>
<evidence type="ECO:0000269" key="2">
    <source>
    </source>
</evidence>
<evidence type="ECO:0000303" key="3">
    <source>
    </source>
</evidence>
<evidence type="ECO:0000305" key="4"/>
<evidence type="ECO:0000305" key="5">
    <source>
    </source>
</evidence>
<proteinExistence type="evidence at protein level"/>
<protein>
    <recommendedName>
        <fullName evidence="3">[Thr6]-bradykinin</fullName>
    </recommendedName>
    <component>
        <recommendedName>
            <fullName evidence="3">Des-Arg9-[Thr6]-bradykinin</fullName>
        </recommendedName>
    </component>
</protein>